<feature type="chain" id="PRO_0000145899" description="Phosphoglycerate kinase">
    <location>
        <begin position="1"/>
        <end position="394"/>
    </location>
</feature>
<feature type="binding site" evidence="1">
    <location>
        <begin position="21"/>
        <end position="23"/>
    </location>
    <ligand>
        <name>substrate</name>
    </ligand>
</feature>
<feature type="binding site" evidence="1">
    <location>
        <position position="36"/>
    </location>
    <ligand>
        <name>substrate</name>
    </ligand>
</feature>
<feature type="binding site" evidence="1">
    <location>
        <begin position="59"/>
        <end position="62"/>
    </location>
    <ligand>
        <name>substrate</name>
    </ligand>
</feature>
<feature type="binding site" evidence="1">
    <location>
        <position position="118"/>
    </location>
    <ligand>
        <name>substrate</name>
    </ligand>
</feature>
<feature type="binding site" evidence="1">
    <location>
        <position position="151"/>
    </location>
    <ligand>
        <name>substrate</name>
    </ligand>
</feature>
<feature type="binding site" evidence="1">
    <location>
        <position position="201"/>
    </location>
    <ligand>
        <name>ATP</name>
        <dbReference type="ChEBI" id="CHEBI:30616"/>
    </ligand>
</feature>
<feature type="binding site" evidence="1">
    <location>
        <position position="292"/>
    </location>
    <ligand>
        <name>ATP</name>
        <dbReference type="ChEBI" id="CHEBI:30616"/>
    </ligand>
</feature>
<feature type="binding site" evidence="1">
    <location>
        <position position="323"/>
    </location>
    <ligand>
        <name>ATP</name>
        <dbReference type="ChEBI" id="CHEBI:30616"/>
    </ligand>
</feature>
<feature type="binding site" evidence="1">
    <location>
        <begin position="350"/>
        <end position="353"/>
    </location>
    <ligand>
        <name>ATP</name>
        <dbReference type="ChEBI" id="CHEBI:30616"/>
    </ligand>
</feature>
<feature type="modified residue" description="Phosphoserine" evidence="1">
    <location>
        <position position="183"/>
    </location>
</feature>
<feature type="modified residue" description="Phosphothreonine" evidence="1">
    <location>
        <position position="299"/>
    </location>
</feature>
<feature type="helix" evidence="2">
    <location>
        <begin position="6"/>
        <end position="8"/>
    </location>
</feature>
<feature type="strand" evidence="2">
    <location>
        <begin position="15"/>
        <end position="19"/>
    </location>
</feature>
<feature type="helix" evidence="2">
    <location>
        <begin position="35"/>
        <end position="39"/>
    </location>
</feature>
<feature type="helix" evidence="2">
    <location>
        <begin position="41"/>
        <end position="49"/>
    </location>
</feature>
<feature type="strand" evidence="2">
    <location>
        <begin position="53"/>
        <end position="57"/>
    </location>
</feature>
<feature type="helix" evidence="2">
    <location>
        <begin position="69"/>
        <end position="71"/>
    </location>
</feature>
<feature type="helix" evidence="2">
    <location>
        <begin position="74"/>
        <end position="84"/>
    </location>
</feature>
<feature type="strand" evidence="2">
    <location>
        <begin position="94"/>
        <end position="96"/>
    </location>
</feature>
<feature type="helix" evidence="2">
    <location>
        <begin position="97"/>
        <end position="104"/>
    </location>
</feature>
<feature type="strand" evidence="2">
    <location>
        <begin position="111"/>
        <end position="113"/>
    </location>
</feature>
<feature type="helix" evidence="2">
    <location>
        <begin position="117"/>
        <end position="119"/>
    </location>
</feature>
<feature type="helix" evidence="2">
    <location>
        <begin position="121"/>
        <end position="125"/>
    </location>
</feature>
<feature type="helix" evidence="2">
    <location>
        <begin position="128"/>
        <end position="135"/>
    </location>
</feature>
<feature type="strand" evidence="2">
    <location>
        <begin position="139"/>
        <end position="143"/>
    </location>
</feature>
<feature type="helix" evidence="2">
    <location>
        <begin position="146"/>
        <end position="148"/>
    </location>
</feature>
<feature type="turn" evidence="2">
    <location>
        <begin position="154"/>
        <end position="157"/>
    </location>
</feature>
<feature type="helix" evidence="2">
    <location>
        <begin position="158"/>
        <end position="161"/>
    </location>
</feature>
<feature type="strand" evidence="2">
    <location>
        <begin position="165"/>
        <end position="167"/>
    </location>
</feature>
<feature type="helix" evidence="2">
    <location>
        <begin position="169"/>
        <end position="183"/>
    </location>
</feature>
<feature type="strand" evidence="2">
    <location>
        <begin position="187"/>
        <end position="193"/>
    </location>
</feature>
<feature type="helix" evidence="2">
    <location>
        <begin position="198"/>
        <end position="208"/>
    </location>
</feature>
<feature type="turn" evidence="2">
    <location>
        <begin position="209"/>
        <end position="211"/>
    </location>
</feature>
<feature type="strand" evidence="2">
    <location>
        <begin position="213"/>
        <end position="217"/>
    </location>
</feature>
<feature type="helix" evidence="2">
    <location>
        <begin position="222"/>
        <end position="228"/>
    </location>
</feature>
<feature type="helix" evidence="2">
    <location>
        <begin position="240"/>
        <end position="242"/>
    </location>
</feature>
<feature type="helix" evidence="2">
    <location>
        <begin position="243"/>
        <end position="256"/>
    </location>
</feature>
<feature type="strand" evidence="2">
    <location>
        <begin position="259"/>
        <end position="261"/>
    </location>
</feature>
<feature type="strand" evidence="2">
    <location>
        <begin position="264"/>
        <end position="271"/>
    </location>
</feature>
<feature type="strand" evidence="2">
    <location>
        <begin position="278"/>
        <end position="282"/>
    </location>
</feature>
<feature type="helix" evidence="2">
    <location>
        <begin position="283"/>
        <end position="285"/>
    </location>
</feature>
<feature type="strand" evidence="2">
    <location>
        <begin position="291"/>
        <end position="295"/>
    </location>
</feature>
<feature type="helix" evidence="2">
    <location>
        <begin position="297"/>
        <end position="308"/>
    </location>
</feature>
<feature type="strand" evidence="2">
    <location>
        <begin position="311"/>
        <end position="317"/>
    </location>
</feature>
<feature type="helix" evidence="2">
    <location>
        <begin position="325"/>
        <end position="327"/>
    </location>
</feature>
<feature type="helix" evidence="2">
    <location>
        <begin position="329"/>
        <end position="340"/>
    </location>
</feature>
<feature type="strand" evidence="2">
    <location>
        <begin position="345"/>
        <end position="348"/>
    </location>
</feature>
<feature type="helix" evidence="2">
    <location>
        <begin position="351"/>
        <end position="359"/>
    </location>
</feature>
<feature type="helix" evidence="2">
    <location>
        <begin position="363"/>
        <end position="365"/>
    </location>
</feature>
<feature type="strand" evidence="2">
    <location>
        <begin position="367"/>
        <end position="369"/>
    </location>
</feature>
<feature type="helix" evidence="2">
    <location>
        <begin position="374"/>
        <end position="380"/>
    </location>
</feature>
<feature type="helix" evidence="2">
    <location>
        <begin position="386"/>
        <end position="389"/>
    </location>
</feature>
<accession>Q81X75</accession>
<accession>Q6HR11</accession>
<accession>Q6KKD0</accession>
<dbReference type="EC" id="2.7.2.3" evidence="1"/>
<dbReference type="EMBL" id="AE016879">
    <property type="protein sequence ID" value="AAP29027.1"/>
    <property type="molecule type" value="Genomic_DNA"/>
</dbReference>
<dbReference type="EMBL" id="AE017334">
    <property type="protein sequence ID" value="AAT34502.1"/>
    <property type="molecule type" value="Genomic_DNA"/>
</dbReference>
<dbReference type="EMBL" id="AE017225">
    <property type="protein sequence ID" value="AAT57277.1"/>
    <property type="molecule type" value="Genomic_DNA"/>
</dbReference>
<dbReference type="RefSeq" id="NP_847541.1">
    <property type="nucleotide sequence ID" value="NC_003997.3"/>
</dbReference>
<dbReference type="RefSeq" id="WP_001036337.1">
    <property type="nucleotide sequence ID" value="NZ_WXXJ01000012.1"/>
</dbReference>
<dbReference type="RefSeq" id="YP_031227.1">
    <property type="nucleotide sequence ID" value="NC_005945.1"/>
</dbReference>
<dbReference type="PDB" id="3UWD">
    <property type="method" value="X-ray"/>
    <property type="resolution" value="1.68 A"/>
    <property type="chains" value="A=1-394"/>
</dbReference>
<dbReference type="PDBsum" id="3UWD"/>
<dbReference type="SMR" id="Q81X75"/>
<dbReference type="IntAct" id="Q81X75">
    <property type="interactions" value="2"/>
</dbReference>
<dbReference type="STRING" id="261594.GBAA_5367"/>
<dbReference type="DNASU" id="1084905"/>
<dbReference type="GeneID" id="45024970"/>
<dbReference type="KEGG" id="ban:BA_5367"/>
<dbReference type="KEGG" id="banh:HYU01_26220"/>
<dbReference type="KEGG" id="bar:GBAA_5367"/>
<dbReference type="KEGG" id="bat:BAS4988"/>
<dbReference type="PATRIC" id="fig|198094.11.peg.5326"/>
<dbReference type="eggNOG" id="COG0126">
    <property type="taxonomic scope" value="Bacteria"/>
</dbReference>
<dbReference type="HOGENOM" id="CLU_025427_0_2_9"/>
<dbReference type="OMA" id="DMIFDIG"/>
<dbReference type="OrthoDB" id="9808460at2"/>
<dbReference type="UniPathway" id="UPA00109">
    <property type="reaction ID" value="UER00185"/>
</dbReference>
<dbReference type="EvolutionaryTrace" id="Q81X75"/>
<dbReference type="Proteomes" id="UP000000427">
    <property type="component" value="Chromosome"/>
</dbReference>
<dbReference type="Proteomes" id="UP000000594">
    <property type="component" value="Chromosome"/>
</dbReference>
<dbReference type="GO" id="GO:0005829">
    <property type="term" value="C:cytosol"/>
    <property type="evidence" value="ECO:0007669"/>
    <property type="project" value="TreeGrafter"/>
</dbReference>
<dbReference type="GO" id="GO:0043531">
    <property type="term" value="F:ADP binding"/>
    <property type="evidence" value="ECO:0007669"/>
    <property type="project" value="TreeGrafter"/>
</dbReference>
<dbReference type="GO" id="GO:0005524">
    <property type="term" value="F:ATP binding"/>
    <property type="evidence" value="ECO:0007669"/>
    <property type="project" value="UniProtKB-KW"/>
</dbReference>
<dbReference type="GO" id="GO:0004618">
    <property type="term" value="F:phosphoglycerate kinase activity"/>
    <property type="evidence" value="ECO:0007669"/>
    <property type="project" value="UniProtKB-UniRule"/>
</dbReference>
<dbReference type="GO" id="GO:0006094">
    <property type="term" value="P:gluconeogenesis"/>
    <property type="evidence" value="ECO:0007669"/>
    <property type="project" value="TreeGrafter"/>
</dbReference>
<dbReference type="GO" id="GO:0006096">
    <property type="term" value="P:glycolytic process"/>
    <property type="evidence" value="ECO:0007669"/>
    <property type="project" value="UniProtKB-UniRule"/>
</dbReference>
<dbReference type="CDD" id="cd00318">
    <property type="entry name" value="Phosphoglycerate_kinase"/>
    <property type="match status" value="1"/>
</dbReference>
<dbReference type="FunFam" id="3.40.50.1260:FF:000001">
    <property type="entry name" value="Phosphoglycerate kinase"/>
    <property type="match status" value="1"/>
</dbReference>
<dbReference type="FunFam" id="3.40.50.1260:FF:000002">
    <property type="entry name" value="Phosphoglycerate kinase"/>
    <property type="match status" value="1"/>
</dbReference>
<dbReference type="Gene3D" id="3.40.50.1260">
    <property type="entry name" value="Phosphoglycerate kinase, N-terminal domain"/>
    <property type="match status" value="2"/>
</dbReference>
<dbReference type="HAMAP" id="MF_00145">
    <property type="entry name" value="Phosphoglyc_kinase"/>
    <property type="match status" value="1"/>
</dbReference>
<dbReference type="InterPro" id="IPR001576">
    <property type="entry name" value="Phosphoglycerate_kinase"/>
</dbReference>
<dbReference type="InterPro" id="IPR015911">
    <property type="entry name" value="Phosphoglycerate_kinase_CS"/>
</dbReference>
<dbReference type="InterPro" id="IPR015824">
    <property type="entry name" value="Phosphoglycerate_kinase_N"/>
</dbReference>
<dbReference type="InterPro" id="IPR036043">
    <property type="entry name" value="Phosphoglycerate_kinase_sf"/>
</dbReference>
<dbReference type="PANTHER" id="PTHR11406">
    <property type="entry name" value="PHOSPHOGLYCERATE KINASE"/>
    <property type="match status" value="1"/>
</dbReference>
<dbReference type="PANTHER" id="PTHR11406:SF23">
    <property type="entry name" value="PHOSPHOGLYCERATE KINASE 1, CHLOROPLASTIC-RELATED"/>
    <property type="match status" value="1"/>
</dbReference>
<dbReference type="Pfam" id="PF00162">
    <property type="entry name" value="PGK"/>
    <property type="match status" value="1"/>
</dbReference>
<dbReference type="PIRSF" id="PIRSF000724">
    <property type="entry name" value="Pgk"/>
    <property type="match status" value="1"/>
</dbReference>
<dbReference type="PRINTS" id="PR00477">
    <property type="entry name" value="PHGLYCKINASE"/>
</dbReference>
<dbReference type="SUPFAM" id="SSF53748">
    <property type="entry name" value="Phosphoglycerate kinase"/>
    <property type="match status" value="1"/>
</dbReference>
<dbReference type="PROSITE" id="PS00111">
    <property type="entry name" value="PGLYCERATE_KINASE"/>
    <property type="match status" value="1"/>
</dbReference>
<gene>
    <name evidence="1" type="primary">pgk</name>
    <name type="ordered locus">BA_5367</name>
    <name type="ordered locus">GBAA_5367</name>
    <name type="ordered locus">BAS4988</name>
</gene>
<protein>
    <recommendedName>
        <fullName evidence="1">Phosphoglycerate kinase</fullName>
        <ecNumber evidence="1">2.7.2.3</ecNumber>
    </recommendedName>
</protein>
<comment type="catalytic activity">
    <reaction evidence="1">
        <text>(2R)-3-phosphoglycerate + ATP = (2R)-3-phospho-glyceroyl phosphate + ADP</text>
        <dbReference type="Rhea" id="RHEA:14801"/>
        <dbReference type="ChEBI" id="CHEBI:30616"/>
        <dbReference type="ChEBI" id="CHEBI:57604"/>
        <dbReference type="ChEBI" id="CHEBI:58272"/>
        <dbReference type="ChEBI" id="CHEBI:456216"/>
        <dbReference type="EC" id="2.7.2.3"/>
    </reaction>
</comment>
<comment type="pathway">
    <text evidence="1">Carbohydrate degradation; glycolysis; pyruvate from D-glyceraldehyde 3-phosphate: step 2/5.</text>
</comment>
<comment type="subunit">
    <text evidence="1">Monomer.</text>
</comment>
<comment type="subcellular location">
    <subcellularLocation>
        <location evidence="1">Cytoplasm</location>
    </subcellularLocation>
</comment>
<comment type="similarity">
    <text evidence="1">Belongs to the phosphoglycerate kinase family.</text>
</comment>
<reference key="1">
    <citation type="journal article" date="2003" name="Nature">
        <title>The genome sequence of Bacillus anthracis Ames and comparison to closely related bacteria.</title>
        <authorList>
            <person name="Read T.D."/>
            <person name="Peterson S.N."/>
            <person name="Tourasse N.J."/>
            <person name="Baillie L.W."/>
            <person name="Paulsen I.T."/>
            <person name="Nelson K.E."/>
            <person name="Tettelin H."/>
            <person name="Fouts D.E."/>
            <person name="Eisen J.A."/>
            <person name="Gill S.R."/>
            <person name="Holtzapple E.K."/>
            <person name="Okstad O.A."/>
            <person name="Helgason E."/>
            <person name="Rilstone J."/>
            <person name="Wu M."/>
            <person name="Kolonay J.F."/>
            <person name="Beanan M.J."/>
            <person name="Dodson R.J."/>
            <person name="Brinkac L.M."/>
            <person name="Gwinn M.L."/>
            <person name="DeBoy R.T."/>
            <person name="Madpu R."/>
            <person name="Daugherty S.C."/>
            <person name="Durkin A.S."/>
            <person name="Haft D.H."/>
            <person name="Nelson W.C."/>
            <person name="Peterson J.D."/>
            <person name="Pop M."/>
            <person name="Khouri H.M."/>
            <person name="Radune D."/>
            <person name="Benton J.L."/>
            <person name="Mahamoud Y."/>
            <person name="Jiang L."/>
            <person name="Hance I.R."/>
            <person name="Weidman J.F."/>
            <person name="Berry K.J."/>
            <person name="Plaut R.D."/>
            <person name="Wolf A.M."/>
            <person name="Watkins K.L."/>
            <person name="Nierman W.C."/>
            <person name="Hazen A."/>
            <person name="Cline R.T."/>
            <person name="Redmond C."/>
            <person name="Thwaite J.E."/>
            <person name="White O."/>
            <person name="Salzberg S.L."/>
            <person name="Thomason B."/>
            <person name="Friedlander A.M."/>
            <person name="Koehler T.M."/>
            <person name="Hanna P.C."/>
            <person name="Kolstoe A.-B."/>
            <person name="Fraser C.M."/>
        </authorList>
    </citation>
    <scope>NUCLEOTIDE SEQUENCE [LARGE SCALE GENOMIC DNA]</scope>
    <source>
        <strain>Ames / isolate Porton</strain>
    </source>
</reference>
<reference key="2">
    <citation type="journal article" date="2009" name="J. Bacteriol.">
        <title>The complete genome sequence of Bacillus anthracis Ames 'Ancestor'.</title>
        <authorList>
            <person name="Ravel J."/>
            <person name="Jiang L."/>
            <person name="Stanley S.T."/>
            <person name="Wilson M.R."/>
            <person name="Decker R.S."/>
            <person name="Read T.D."/>
            <person name="Worsham P."/>
            <person name="Keim P.S."/>
            <person name="Salzberg S.L."/>
            <person name="Fraser-Liggett C.M."/>
            <person name="Rasko D.A."/>
        </authorList>
    </citation>
    <scope>NUCLEOTIDE SEQUENCE [LARGE SCALE GENOMIC DNA]</scope>
    <source>
        <strain>Ames ancestor</strain>
    </source>
</reference>
<reference key="3">
    <citation type="submission" date="2004-01" db="EMBL/GenBank/DDBJ databases">
        <title>Complete genome sequence of Bacillus anthracis Sterne.</title>
        <authorList>
            <person name="Brettin T.S."/>
            <person name="Bruce D."/>
            <person name="Challacombe J.F."/>
            <person name="Gilna P."/>
            <person name="Han C."/>
            <person name="Hill K."/>
            <person name="Hitchcock P."/>
            <person name="Jackson P."/>
            <person name="Keim P."/>
            <person name="Longmire J."/>
            <person name="Lucas S."/>
            <person name="Okinaka R."/>
            <person name="Richardson P."/>
            <person name="Rubin E."/>
            <person name="Tice H."/>
        </authorList>
    </citation>
    <scope>NUCLEOTIDE SEQUENCE [LARGE SCALE GENOMIC DNA]</scope>
    <source>
        <strain>Sterne</strain>
    </source>
</reference>
<proteinExistence type="evidence at protein level"/>
<keyword id="KW-0002">3D-structure</keyword>
<keyword id="KW-0067">ATP-binding</keyword>
<keyword id="KW-0963">Cytoplasm</keyword>
<keyword id="KW-0324">Glycolysis</keyword>
<keyword id="KW-0418">Kinase</keyword>
<keyword id="KW-0547">Nucleotide-binding</keyword>
<keyword id="KW-0597">Phosphoprotein</keyword>
<keyword id="KW-1185">Reference proteome</keyword>
<keyword id="KW-0808">Transferase</keyword>
<evidence type="ECO:0000255" key="1">
    <source>
        <dbReference type="HAMAP-Rule" id="MF_00145"/>
    </source>
</evidence>
<evidence type="ECO:0007829" key="2">
    <source>
        <dbReference type="PDB" id="3UWD"/>
    </source>
</evidence>
<sequence>MNKKSIRDVDLKGKRVFCRVDFNVPMKEGKITDETRIRAALPTIQYLVEQGAKVILASHLGRPKGQAVEELRLTPVAARLGELLGKDVKKADEAFGPVAQEMVAAMNEGDVLVLENVRFYAGEEKNDAELAKEFAALADIFVNDAFGAAHRAHASTAGIADYLPAVSGLLMEKELEVLGKALSNPERPFTAIIGGAKVKDKIGLIRHLLDKVDNLIIGGGLAYTFVKALGHEIGLSLCEDDKIELAKEFMQLAKEKGVNFYMPVDVVITEEFSETATTKIVGIDSIPSNWEGVDIGPKTREIYADVIKNSKLVVWNGPMGVFEMTPFAEGTKAVGQALADAEGTYSVIGGGDSAAAVEKFGMADKMSHISTGGGASLEFMEGKELPGVVCLNDK</sequence>
<name>PGK_BACAN</name>
<organism>
    <name type="scientific">Bacillus anthracis</name>
    <dbReference type="NCBI Taxonomy" id="1392"/>
    <lineage>
        <taxon>Bacteria</taxon>
        <taxon>Bacillati</taxon>
        <taxon>Bacillota</taxon>
        <taxon>Bacilli</taxon>
        <taxon>Bacillales</taxon>
        <taxon>Bacillaceae</taxon>
        <taxon>Bacillus</taxon>
        <taxon>Bacillus cereus group</taxon>
    </lineage>
</organism>